<proteinExistence type="inferred from homology"/>
<accession>B9K800</accession>
<keyword id="KW-0067">ATP-binding</keyword>
<keyword id="KW-0227">DNA damage</keyword>
<keyword id="KW-0234">DNA repair</keyword>
<keyword id="KW-0238">DNA-binding</keyword>
<keyword id="KW-0547">Nucleotide-binding</keyword>
<reference key="1">
    <citation type="submission" date="2007-11" db="EMBL/GenBank/DDBJ databases">
        <title>The genome sequence of the hyperthermophilic bacterium Thermotoga neapolitana.</title>
        <authorList>
            <person name="Lim S.K."/>
            <person name="Kim J.S."/>
            <person name="Cha S.H."/>
            <person name="Park B.C."/>
            <person name="Lee D.S."/>
            <person name="Tae H.S."/>
            <person name="Kim S.-J."/>
            <person name="Kim J.J."/>
            <person name="Park K.J."/>
            <person name="Lee S.Y."/>
        </authorList>
    </citation>
    <scope>NUCLEOTIDE SEQUENCE [LARGE SCALE GENOMIC DNA]</scope>
    <source>
        <strain>ATCC 49049 / DSM 4359 / NBRC 107923 / NS-E</strain>
    </source>
</reference>
<gene>
    <name evidence="1" type="primary">mutS</name>
    <name type="ordered locus">CTN_0907</name>
</gene>
<organism>
    <name type="scientific">Thermotoga neapolitana (strain ATCC 49049 / DSM 4359 / NBRC 107923 / NS-E)</name>
    <dbReference type="NCBI Taxonomy" id="309803"/>
    <lineage>
        <taxon>Bacteria</taxon>
        <taxon>Thermotogati</taxon>
        <taxon>Thermotogota</taxon>
        <taxon>Thermotogae</taxon>
        <taxon>Thermotogales</taxon>
        <taxon>Thermotogaceae</taxon>
        <taxon>Thermotoga</taxon>
    </lineage>
</organism>
<comment type="function">
    <text evidence="1">This protein is involved in the repair of mismatches in DNA. It is possible that it carries out the mismatch recognition step. This protein has a weak ATPase activity.</text>
</comment>
<comment type="similarity">
    <text evidence="1">Belongs to the DNA mismatch repair MutS family.</text>
</comment>
<feature type="chain" id="PRO_1000118700" description="DNA mismatch repair protein MutS">
    <location>
        <begin position="1"/>
        <end position="801"/>
    </location>
</feature>
<feature type="binding site" evidence="1">
    <location>
        <begin position="590"/>
        <end position="597"/>
    </location>
    <ligand>
        <name>ATP</name>
        <dbReference type="ChEBI" id="CHEBI:30616"/>
    </ligand>
</feature>
<evidence type="ECO:0000255" key="1">
    <source>
        <dbReference type="HAMAP-Rule" id="MF_00096"/>
    </source>
</evidence>
<sequence length="801" mass="92081">MKMTPLMEQYLKIKEQYKDSILLFRLGDFYEAFFEDAKTVSKVLNIVLTKRQDAPMAGIPYHALNTYLKKLVEAGYKVAICDQMEEPSKSKKLIRREVTRVVTPGAIVEDEFLSETNNYMVVLVREKEKYCAVFCDVSTGEVLIHESIDEQEVLDLMKAYSVSEIVCPEGLESEVREKLPGVYIEVIDEWYFSEPEEEVKRIYGIEDIHHFELSSLAMKSLSALIKYIKYTMISEKLNLKPPVTISRKNFMILDSATVENLSLIPGEKGKNLFDVLNHTETPMGARLLKKWILHPLTDRQQIEDRLNAVEKLKEDRLKLEQIRNLLSRVRDVERIVSRVEYNRAIPRDLVALRETLSVVPELNEELSNFDFFEKLNFPDSLFDLLCKAIEDDPAGSPGEGKVIKRGFSPELDEYRDLLEHSEEKLKEFEEREREKTGIQKLKVGYNQVFGYYIEVTKANLDKVPEDYERKQTLVNSERFTTPELKEFETKIMAAKERIEELEKELFRNVCEEVKKHKETLLEISEELARIDVLATLAYDAILYNYTRPTFSEDRMEIIGGRHPVVERFTRDFVENDLYMDDEKRFTVITGPNMSGKSTFIRQVGLISLMAQIGSFVPAKKAVLPVFDRIFTRMGARDDLAGGRSTFLVEMNEMALILLKATKKSLVLLDEVGRGTGTQDGISIAWAISEELISRGCKVLFATHFIELTNLENSFPQVQNKTILVKEEGSNVVFTHRVVDGVADRSYGADRSYGIEVARIAGIPENVIRRAFEIMEKGFKTKSQRKNGKVKKFSQQIPLFPA</sequence>
<name>MUTS_THENN</name>
<dbReference type="EMBL" id="CP000916">
    <property type="protein sequence ID" value="ACM23083.1"/>
    <property type="molecule type" value="Genomic_DNA"/>
</dbReference>
<dbReference type="RefSeq" id="WP_015919400.1">
    <property type="nucleotide sequence ID" value="NC_011978.1"/>
</dbReference>
<dbReference type="SMR" id="B9K800"/>
<dbReference type="STRING" id="309803.CTN_0907"/>
<dbReference type="KEGG" id="tna:CTN_0907"/>
<dbReference type="eggNOG" id="COG0249">
    <property type="taxonomic scope" value="Bacteria"/>
</dbReference>
<dbReference type="HOGENOM" id="CLU_002472_3_1_0"/>
<dbReference type="Proteomes" id="UP000000445">
    <property type="component" value="Chromosome"/>
</dbReference>
<dbReference type="GO" id="GO:0005829">
    <property type="term" value="C:cytosol"/>
    <property type="evidence" value="ECO:0007669"/>
    <property type="project" value="TreeGrafter"/>
</dbReference>
<dbReference type="GO" id="GO:0005524">
    <property type="term" value="F:ATP binding"/>
    <property type="evidence" value="ECO:0007669"/>
    <property type="project" value="UniProtKB-UniRule"/>
</dbReference>
<dbReference type="GO" id="GO:0140664">
    <property type="term" value="F:ATP-dependent DNA damage sensor activity"/>
    <property type="evidence" value="ECO:0007669"/>
    <property type="project" value="InterPro"/>
</dbReference>
<dbReference type="GO" id="GO:0003684">
    <property type="term" value="F:damaged DNA binding"/>
    <property type="evidence" value="ECO:0007669"/>
    <property type="project" value="UniProtKB-UniRule"/>
</dbReference>
<dbReference type="GO" id="GO:0030983">
    <property type="term" value="F:mismatched DNA binding"/>
    <property type="evidence" value="ECO:0007669"/>
    <property type="project" value="InterPro"/>
</dbReference>
<dbReference type="GO" id="GO:0006298">
    <property type="term" value="P:mismatch repair"/>
    <property type="evidence" value="ECO:0007669"/>
    <property type="project" value="UniProtKB-UniRule"/>
</dbReference>
<dbReference type="CDD" id="cd03284">
    <property type="entry name" value="ABC_MutS1"/>
    <property type="match status" value="1"/>
</dbReference>
<dbReference type="FunFam" id="1.10.1420.10:FF:000007">
    <property type="entry name" value="DNA mismatch repair protein MutS"/>
    <property type="match status" value="1"/>
</dbReference>
<dbReference type="FunFam" id="3.40.1170.10:FF:000001">
    <property type="entry name" value="DNA mismatch repair protein MutS"/>
    <property type="match status" value="1"/>
</dbReference>
<dbReference type="FunFam" id="3.40.50.300:FF:000870">
    <property type="entry name" value="MutS protein homolog 4"/>
    <property type="match status" value="1"/>
</dbReference>
<dbReference type="Gene3D" id="1.10.1420.10">
    <property type="match status" value="2"/>
</dbReference>
<dbReference type="Gene3D" id="3.40.1170.10">
    <property type="entry name" value="DNA repair protein MutS, domain I"/>
    <property type="match status" value="1"/>
</dbReference>
<dbReference type="Gene3D" id="3.30.420.110">
    <property type="entry name" value="MutS, connector domain"/>
    <property type="match status" value="1"/>
</dbReference>
<dbReference type="Gene3D" id="3.40.50.300">
    <property type="entry name" value="P-loop containing nucleotide triphosphate hydrolases"/>
    <property type="match status" value="1"/>
</dbReference>
<dbReference type="HAMAP" id="MF_00096">
    <property type="entry name" value="MutS"/>
    <property type="match status" value="1"/>
</dbReference>
<dbReference type="InterPro" id="IPR005748">
    <property type="entry name" value="DNA_mismatch_repair_MutS"/>
</dbReference>
<dbReference type="InterPro" id="IPR007695">
    <property type="entry name" value="DNA_mismatch_repair_MutS-lik_N"/>
</dbReference>
<dbReference type="InterPro" id="IPR017261">
    <property type="entry name" value="DNA_mismatch_repair_MutS/MSH"/>
</dbReference>
<dbReference type="InterPro" id="IPR000432">
    <property type="entry name" value="DNA_mismatch_repair_MutS_C"/>
</dbReference>
<dbReference type="InterPro" id="IPR007861">
    <property type="entry name" value="DNA_mismatch_repair_MutS_clamp"/>
</dbReference>
<dbReference type="InterPro" id="IPR007696">
    <property type="entry name" value="DNA_mismatch_repair_MutS_core"/>
</dbReference>
<dbReference type="InterPro" id="IPR016151">
    <property type="entry name" value="DNA_mismatch_repair_MutS_N"/>
</dbReference>
<dbReference type="InterPro" id="IPR036187">
    <property type="entry name" value="DNA_mismatch_repair_MutS_sf"/>
</dbReference>
<dbReference type="InterPro" id="IPR007860">
    <property type="entry name" value="DNA_mmatch_repair_MutS_con_dom"/>
</dbReference>
<dbReference type="InterPro" id="IPR045076">
    <property type="entry name" value="MutS"/>
</dbReference>
<dbReference type="InterPro" id="IPR036678">
    <property type="entry name" value="MutS_con_dom_sf"/>
</dbReference>
<dbReference type="InterPro" id="IPR027417">
    <property type="entry name" value="P-loop_NTPase"/>
</dbReference>
<dbReference type="NCBIfam" id="TIGR01070">
    <property type="entry name" value="mutS1"/>
    <property type="match status" value="1"/>
</dbReference>
<dbReference type="NCBIfam" id="NF003810">
    <property type="entry name" value="PRK05399.1"/>
    <property type="match status" value="1"/>
</dbReference>
<dbReference type="PANTHER" id="PTHR11361:SF34">
    <property type="entry name" value="DNA MISMATCH REPAIR PROTEIN MSH1, MITOCHONDRIAL"/>
    <property type="match status" value="1"/>
</dbReference>
<dbReference type="PANTHER" id="PTHR11361">
    <property type="entry name" value="DNA MISMATCH REPAIR PROTEIN MUTS FAMILY MEMBER"/>
    <property type="match status" value="1"/>
</dbReference>
<dbReference type="Pfam" id="PF01624">
    <property type="entry name" value="MutS_I"/>
    <property type="match status" value="1"/>
</dbReference>
<dbReference type="Pfam" id="PF05188">
    <property type="entry name" value="MutS_II"/>
    <property type="match status" value="1"/>
</dbReference>
<dbReference type="Pfam" id="PF05192">
    <property type="entry name" value="MutS_III"/>
    <property type="match status" value="1"/>
</dbReference>
<dbReference type="Pfam" id="PF05190">
    <property type="entry name" value="MutS_IV"/>
    <property type="match status" value="1"/>
</dbReference>
<dbReference type="Pfam" id="PF00488">
    <property type="entry name" value="MutS_V"/>
    <property type="match status" value="1"/>
</dbReference>
<dbReference type="PIRSF" id="PIRSF037677">
    <property type="entry name" value="DNA_mis_repair_Msh6"/>
    <property type="match status" value="1"/>
</dbReference>
<dbReference type="SMART" id="SM00534">
    <property type="entry name" value="MUTSac"/>
    <property type="match status" value="1"/>
</dbReference>
<dbReference type="SMART" id="SM00533">
    <property type="entry name" value="MUTSd"/>
    <property type="match status" value="1"/>
</dbReference>
<dbReference type="SUPFAM" id="SSF55271">
    <property type="entry name" value="DNA repair protein MutS, domain I"/>
    <property type="match status" value="1"/>
</dbReference>
<dbReference type="SUPFAM" id="SSF53150">
    <property type="entry name" value="DNA repair protein MutS, domain II"/>
    <property type="match status" value="1"/>
</dbReference>
<dbReference type="SUPFAM" id="SSF48334">
    <property type="entry name" value="DNA repair protein MutS, domain III"/>
    <property type="match status" value="1"/>
</dbReference>
<dbReference type="SUPFAM" id="SSF52540">
    <property type="entry name" value="P-loop containing nucleoside triphosphate hydrolases"/>
    <property type="match status" value="1"/>
</dbReference>
<dbReference type="PROSITE" id="PS00486">
    <property type="entry name" value="DNA_MISMATCH_REPAIR_2"/>
    <property type="match status" value="1"/>
</dbReference>
<protein>
    <recommendedName>
        <fullName evidence="1">DNA mismatch repair protein MutS</fullName>
    </recommendedName>
</protein>